<protein>
    <recommendedName>
        <fullName evidence="8">Insecticidal crystal protein Cry35Ab1</fullName>
    </recommendedName>
    <alternativeName>
        <fullName evidence="8">44 kDa insecticidal crystal protein</fullName>
    </alternativeName>
</protein>
<feature type="chain" id="PRO_0000448611" description="Insecticidal crystal protein Cry35Ab1">
    <location>
        <begin position="1"/>
        <end position="383"/>
    </location>
</feature>
<feature type="domain" description="Ricin B-type lectin" evidence="1">
    <location>
        <begin position="26"/>
        <end position="138"/>
    </location>
</feature>
<feature type="mutagenesis site" description="No change in toxicity or in overall structure, approximately equivalent to the truncated protein isolated from parasporal inclusion bodies." evidence="7">
    <location>
        <begin position="355"/>
        <end position="383"/>
    </location>
</feature>
<feature type="strand" evidence="13">
    <location>
        <begin position="4"/>
        <end position="12"/>
    </location>
</feature>
<feature type="turn" evidence="13">
    <location>
        <begin position="13"/>
        <end position="15"/>
    </location>
</feature>
<feature type="strand" evidence="13">
    <location>
        <begin position="18"/>
        <end position="22"/>
    </location>
</feature>
<feature type="strand" evidence="13">
    <location>
        <begin position="31"/>
        <end position="33"/>
    </location>
</feature>
<feature type="helix" evidence="13">
    <location>
        <begin position="40"/>
        <end position="42"/>
    </location>
</feature>
<feature type="strand" evidence="13">
    <location>
        <begin position="47"/>
        <end position="52"/>
    </location>
</feature>
<feature type="turn" evidence="13">
    <location>
        <begin position="53"/>
        <end position="55"/>
    </location>
</feature>
<feature type="strand" evidence="13">
    <location>
        <begin position="56"/>
        <end position="61"/>
    </location>
</feature>
<feature type="helix" evidence="13">
    <location>
        <begin position="65"/>
        <end position="67"/>
    </location>
</feature>
<feature type="strand" evidence="13">
    <location>
        <begin position="69"/>
        <end position="73"/>
    </location>
</feature>
<feature type="strand" evidence="13">
    <location>
        <begin position="76"/>
        <end position="80"/>
    </location>
</feature>
<feature type="helix" evidence="13">
    <location>
        <begin position="87"/>
        <end position="89"/>
    </location>
</feature>
<feature type="strand" evidence="13">
    <location>
        <begin position="91"/>
        <end position="96"/>
    </location>
</feature>
<feature type="strand" evidence="13">
    <location>
        <begin position="99"/>
        <end position="104"/>
    </location>
</feature>
<feature type="strand" evidence="13">
    <location>
        <begin position="109"/>
        <end position="112"/>
    </location>
</feature>
<feature type="helix" evidence="13">
    <location>
        <begin position="115"/>
        <end position="117"/>
    </location>
</feature>
<feature type="strand" evidence="13">
    <location>
        <begin position="121"/>
        <end position="124"/>
    </location>
</feature>
<feature type="helix" evidence="13">
    <location>
        <begin position="131"/>
        <end position="133"/>
    </location>
</feature>
<feature type="strand" evidence="13">
    <location>
        <begin position="135"/>
        <end position="142"/>
    </location>
</feature>
<feature type="strand" evidence="13">
    <location>
        <begin position="174"/>
        <end position="182"/>
    </location>
</feature>
<feature type="helix" evidence="13">
    <location>
        <begin position="183"/>
        <end position="185"/>
    </location>
</feature>
<feature type="helix" evidence="13">
    <location>
        <begin position="193"/>
        <end position="199"/>
    </location>
</feature>
<feature type="strand" evidence="13">
    <location>
        <begin position="201"/>
        <end position="213"/>
    </location>
</feature>
<feature type="strand" evidence="13">
    <location>
        <begin position="219"/>
        <end position="221"/>
    </location>
</feature>
<feature type="strand" evidence="13">
    <location>
        <begin position="225"/>
        <end position="234"/>
    </location>
</feature>
<feature type="turn" evidence="13">
    <location>
        <begin position="240"/>
        <end position="242"/>
    </location>
</feature>
<feature type="helix" evidence="13">
    <location>
        <begin position="243"/>
        <end position="247"/>
    </location>
</feature>
<feature type="strand" evidence="13">
    <location>
        <begin position="248"/>
        <end position="252"/>
    </location>
</feature>
<feature type="strand" evidence="13">
    <location>
        <begin position="257"/>
        <end position="259"/>
    </location>
</feature>
<feature type="strand" evidence="13">
    <location>
        <begin position="263"/>
        <end position="265"/>
    </location>
</feature>
<feature type="helix" evidence="13">
    <location>
        <begin position="269"/>
        <end position="271"/>
    </location>
</feature>
<feature type="helix" evidence="13">
    <location>
        <begin position="272"/>
        <end position="279"/>
    </location>
</feature>
<feature type="strand" evidence="13">
    <location>
        <begin position="287"/>
        <end position="289"/>
    </location>
</feature>
<feature type="strand" evidence="13">
    <location>
        <begin position="292"/>
        <end position="301"/>
    </location>
</feature>
<feature type="strand" evidence="13">
    <location>
        <begin position="303"/>
        <end position="305"/>
    </location>
</feature>
<feature type="strand" evidence="13">
    <location>
        <begin position="307"/>
        <end position="336"/>
    </location>
</feature>
<feature type="helix" evidence="13">
    <location>
        <begin position="338"/>
        <end position="340"/>
    </location>
</feature>
<feature type="strand" evidence="13">
    <location>
        <begin position="342"/>
        <end position="347"/>
    </location>
</feature>
<feature type="helix" evidence="13">
    <location>
        <begin position="349"/>
        <end position="355"/>
    </location>
</feature>
<feature type="helix" evidence="13">
    <location>
        <begin position="361"/>
        <end position="368"/>
    </location>
</feature>
<feature type="helix" evidence="13">
    <location>
        <begin position="372"/>
        <end position="380"/>
    </location>
</feature>
<keyword id="KW-0002">3D-structure</keyword>
<keyword id="KW-0749">Sporulation</keyword>
<keyword id="KW-0800">Toxin</keyword>
<keyword id="KW-0843">Virulence</keyword>
<evidence type="ECO:0000255" key="1">
    <source>
        <dbReference type="PROSITE-ProRule" id="PRU00174"/>
    </source>
</evidence>
<evidence type="ECO:0000269" key="2">
    <source>
    </source>
</evidence>
<evidence type="ECO:0000269" key="3">
    <source>
    </source>
</evidence>
<evidence type="ECO:0000269" key="4">
    <source>
    </source>
</evidence>
<evidence type="ECO:0000269" key="5">
    <source>
    </source>
</evidence>
<evidence type="ECO:0000269" key="6">
    <source>
    </source>
</evidence>
<evidence type="ECO:0000269" key="7">
    <source>
    </source>
</evidence>
<evidence type="ECO:0000303" key="8">
    <source>
    </source>
</evidence>
<evidence type="ECO:0000305" key="9"/>
<evidence type="ECO:0000305" key="10">
    <source>
    </source>
</evidence>
<evidence type="ECO:0000305" key="11">
    <source>
    </source>
</evidence>
<evidence type="ECO:0007744" key="12">
    <source>
        <dbReference type="PDB" id="4JP0"/>
    </source>
</evidence>
<evidence type="ECO:0007829" key="13">
    <source>
        <dbReference type="PDB" id="4JP0"/>
    </source>
</evidence>
<dbReference type="EMBL" id="AY011120">
    <property type="protein sequence ID" value="AAG41672.1"/>
    <property type="molecule type" value="Genomic_DNA"/>
</dbReference>
<dbReference type="PDB" id="4JP0">
    <property type="method" value="X-ray"/>
    <property type="resolution" value="1.80 A"/>
    <property type="chains" value="A=1-383"/>
</dbReference>
<dbReference type="PDBsum" id="4JP0"/>
<dbReference type="SMR" id="Q939S9"/>
<dbReference type="EvolutionaryTrace" id="Q939S9"/>
<dbReference type="GO" id="GO:0090729">
    <property type="term" value="F:toxin activity"/>
    <property type="evidence" value="ECO:0007669"/>
    <property type="project" value="UniProtKB-KW"/>
</dbReference>
<dbReference type="GO" id="GO:0030435">
    <property type="term" value="P:sporulation resulting in formation of a cellular spore"/>
    <property type="evidence" value="ECO:0007669"/>
    <property type="project" value="UniProtKB-KW"/>
</dbReference>
<dbReference type="CDD" id="cd23448">
    <property type="entry name" value="beta-trefoil_Ricin_Cry35Ab1"/>
    <property type="match status" value="1"/>
</dbReference>
<dbReference type="Gene3D" id="2.80.10.50">
    <property type="match status" value="1"/>
</dbReference>
<dbReference type="Gene3D" id="1.10.10.60">
    <property type="entry name" value="Homeodomain-like"/>
    <property type="match status" value="1"/>
</dbReference>
<dbReference type="InterPro" id="IPR035992">
    <property type="entry name" value="Ricin_B-like_lectins"/>
</dbReference>
<dbReference type="InterPro" id="IPR008872">
    <property type="entry name" value="Toxin_P42"/>
</dbReference>
<dbReference type="Pfam" id="PF05431">
    <property type="entry name" value="Toxin_10"/>
    <property type="match status" value="1"/>
</dbReference>
<dbReference type="SUPFAM" id="SSF50370">
    <property type="entry name" value="Ricin B-like lectins"/>
    <property type="match status" value="1"/>
</dbReference>
<dbReference type="PROSITE" id="PS50231">
    <property type="entry name" value="RICIN_B_LECTIN"/>
    <property type="match status" value="1"/>
</dbReference>
<reference key="1">
    <citation type="journal article" date="2001" name="Nat. Biotechnol.">
        <title>Insecticidal proteins from Bacillus thuringiensis protect corn from corn rootworms.</title>
        <authorList>
            <person name="Moellenbeck D.J."/>
            <person name="Peters M.L."/>
            <person name="Bing J.W."/>
            <person name="Rouse J.R."/>
            <person name="Higgins L.S."/>
            <person name="Sims L."/>
            <person name="Nevshemal T."/>
            <person name="Marshall L."/>
            <person name="Ellis R.T."/>
            <person name="Bystrak P.G."/>
            <person name="Lang B.A."/>
            <person name="Stewart J.L."/>
            <person name="Kouba K."/>
            <person name="Sondag V."/>
            <person name="Gustafson V."/>
            <person name="Nour K."/>
            <person name="Xu D."/>
            <person name="Swenson J."/>
            <person name="Zhang J."/>
            <person name="Czapla T."/>
            <person name="Schwab G."/>
            <person name="Jayne S."/>
            <person name="Stockhoff B.A."/>
            <person name="Narva K."/>
            <person name="Schnepf H.E."/>
            <person name="Stelman S.J."/>
            <person name="Poutre C."/>
            <person name="Koziel M."/>
            <person name="Duck N."/>
        </authorList>
    </citation>
    <scope>NUCLEOTIDE SEQUENCE [GENOMIC DNA]</scope>
    <scope>FUNCTION</scope>
    <scope>SUBUNIT</scope>
    <scope>DEVELOPMENTAL STAGE</scope>
    <scope>PROBABLE OPERON</scope>
    <scope>POST-TRANSLATIONAL CLEAVAGE</scope>
    <scope>BIOTECHNOLOGY</scope>
    <source>
        <strain>PS149B1</strain>
    </source>
</reference>
<reference key="2">
    <citation type="journal article" date="2002" name="Appl. Environ. Microbiol.">
        <title>Novel Bacillus thuringiensis binary insecticidal crystal proteins active on western corn rootworm, Diabrotica virgifera virgifera LeConte.</title>
        <authorList>
            <person name="Ellis R.T."/>
            <person name="Stockhoff B.A."/>
            <person name="Stamp L."/>
            <person name="Schnepf H.E."/>
            <person name="Schwab G.E."/>
            <person name="Knuth M."/>
            <person name="Russell J."/>
            <person name="Cardineau G.A."/>
            <person name="Narva K.E."/>
        </authorList>
    </citation>
    <scope>NUCLEOTIDE SEQUENCE [GENOMIC DNA]</scope>
    <scope>FUNCTION</scope>
    <scope>SUBUNIT</scope>
    <scope>PROBABLE OPERON</scope>
    <source>
        <strain>PS149B1</strain>
    </source>
</reference>
<reference key="3">
    <citation type="journal article" date="2002" name="J. Econ. Entomol.">
        <title>Binary insecticidal crystal protein from Bacillus thuringiensis, strain PS149B1: effects of individual protein components and mixtures in laboratory bioassays.</title>
        <authorList>
            <person name="Herman R.A."/>
            <person name="Scherer P.N."/>
            <person name="Young D.L."/>
            <person name="Mihaliak C.A."/>
            <person name="Meade T."/>
            <person name="Woodsworth A.T."/>
            <person name="Stockhoff B.A."/>
            <person name="Narva K.E."/>
        </authorList>
    </citation>
    <scope>FUNCTION</scope>
    <source>
        <strain>PS149B1</strain>
    </source>
</reference>
<reference key="4">
    <citation type="journal article" date="2004" name="Biochemistry">
        <title>A novel Bacillus thuringiensis (PS149B1) containing a Cry34Ab1/Cry35Ab1 binary toxin specific for the western corn rootworm Diabrotica virgifera virgifera LeConte forms ion channels in lipid membranes.</title>
        <authorList>
            <person name="Masson L."/>
            <person name="Schwab G."/>
            <person name="Mazza A."/>
            <person name="Brousseau R."/>
            <person name="Potvin L."/>
            <person name="Schwartz J.L."/>
        </authorList>
    </citation>
    <scope>FUNCTION</scope>
    <scope>SUBUNIT</scope>
    <scope>POST-TRANSLATIONAL CLEAVAGE</scope>
</reference>
<reference key="5">
    <citation type="journal article" date="2013" name="PLoS ONE">
        <title>Bacillus thuringiensis Cry34Ab1/Cry35Ab1 interactions with western corn rootworm midgut membrane binding sites.</title>
        <authorList>
            <person name="Li H."/>
            <person name="Olson M."/>
            <person name="Lin G."/>
            <person name="Hey T."/>
            <person name="Tan S.Y."/>
            <person name="Narva K.E."/>
        </authorList>
    </citation>
    <scope>FUNCTION</scope>
    <scope>BINDING TO HOST CELLS</scope>
</reference>
<reference evidence="12" key="6">
    <citation type="journal article" date="2014" name="PLoS ONE">
        <title>Structural and biophysical characterization of Bacillus thuringiensis insecticidal proteins Cry34Ab1 and Cry35Ab1.</title>
        <authorList>
            <person name="Kelker M.S."/>
            <person name="Berry C."/>
            <person name="Evans S.L."/>
            <person name="Pai R."/>
            <person name="McCaskill D.G."/>
            <person name="Wang N.X."/>
            <person name="Russell J.C."/>
            <person name="Baker M.D."/>
            <person name="Yang C."/>
            <person name="Pflugrath J.W."/>
            <person name="Wade M."/>
            <person name="Wess T.J."/>
            <person name="Narva K.E."/>
        </authorList>
    </citation>
    <scope>X-RAY CRYSTALLOGRAPHY (1.80 ANGSTROMS)</scope>
    <scope>SUBUNIT</scope>
    <scope>DOMAIN</scope>
    <scope>MUTAGENESIS OF 355-LEU--PHE-383</scope>
</reference>
<accession>Q939S9</accession>
<comment type="function">
    <text evidence="2 3 4 5 6">Component of a binary insecticidal toxin active on western corn rootworm (WCR, Diabrotica virgifera subsp. virgifera Le Conte) and probably also on northern corn rootworm (D.barberi). Both proteins are required for maximal toxicity. The larval midgut epithelium is probably the primary target (PubMed:11433280, PubMed:11872461). This protein alone has no activity against southern corn rootworm (Diabrotica undecimpunctata howardi Barber), but it synergizes the toxic effect of its Cry34Ab1 partner (PubMed:12076012). The 2 proteins individually and together form ion channels; channels made in the presence of the 2 proteins have higher conductance (PubMed:15379574). Binds to WCR third instar midgut brush border membrane vesicles; binding improves over 10-fold in the presence of Cry34Ab1 (PubMed:23308139).</text>
</comment>
<comment type="subunit">
    <text evidence="2 3 5 7">Monomer in solution (PubMed:25390338). Copurifies from parasporal inclusion bodies with Cry34Ab1 (PubMed:11433280, PubMed:11872461, PubMed:15379574).</text>
</comment>
<comment type="developmental stage">
    <text evidence="2">Expressed upon sporulation.</text>
</comment>
<comment type="induction">
    <text evidence="10 11">Probably part of the cry34Ab1-cry35Ab1 operon.</text>
</comment>
<comment type="PTM">
    <text evidence="2 5">Proteolytic processing occurs near the C-terminus yielding a stable protein of approximately 40 kDa; this may be the active form of the protein.</text>
</comment>
<comment type="biotechnology">
    <text evidence="2">Expression of the 2 toxin genes in transgenic corn confers resistance to WCR and has been commercialized.</text>
</comment>
<comment type="similarity">
    <text evidence="9">Belongs to the toxin_10 family.</text>
</comment>
<organism>
    <name type="scientific">Bacillus thuringiensis</name>
    <dbReference type="NCBI Taxonomy" id="1428"/>
    <lineage>
        <taxon>Bacteria</taxon>
        <taxon>Bacillati</taxon>
        <taxon>Bacillota</taxon>
        <taxon>Bacilli</taxon>
        <taxon>Bacillales</taxon>
        <taxon>Bacillaceae</taxon>
        <taxon>Bacillus</taxon>
        <taxon>Bacillus cereus group</taxon>
    </lineage>
</organism>
<name>C35AB_BACTU</name>
<sequence>MLDTNKVYEISNHANGLYAATYLSLDDSGVSLMNKNDDDIDDYNLKWFLFPIDDDQYIITSYAANNCKVWNVNNDKINVSTYSSTNSIQKWQIKANGSSYVIQSDNGKVLTAGTGQALGLIRLTDESSNNPNQQWNLTSVQTIQLPQKPIIDTKLKDYPKYSPTGNIDNGTSPQLMGWTLVPCIMVNDPNIDKNTQIKTTPYYILKKYQYWQRAVGSNVALRPHEKKSYTYEWGTEIDQKTTIINTLGFQINIDSGMKFDIPEVGGGTDEIKTQLNEELKIEYSHETKIMEKYQEQSEIDNPTDQSMNSIGFLTITSLELYRYNGSEIRIMQIQTSDNDTYNVTSYPNHQQALLLLTNHSYEEVEEITNIPKSTLKKLKKYYF</sequence>
<proteinExistence type="evidence at protein level"/>